<accession>O75607</accession>
<accession>Q9UNY6</accession>
<sequence>MAAGTAAALAFLSQESRTRAGGVGGLRVPAPVTMDSFFFGCELSGHTRSFTFKVEEEDDAEHVLALTMLCLTEGAKDECNVVEVVARNHDHQEIAVPVANLKLSCQPMLSLDDFQLQPPVTFRLKSGSGPVRITGRHQIVTMSNDVSEEESEEEEEDSDEEEVELCPILPAKKQGGRP</sequence>
<gene>
    <name type="primary">NPM3</name>
</gene>
<keyword id="KW-0007">Acetylation</keyword>
<keyword id="KW-0143">Chaperone</keyword>
<keyword id="KW-0903">Direct protein sequencing</keyword>
<keyword id="KW-0488">Methylation</keyword>
<keyword id="KW-0539">Nucleus</keyword>
<keyword id="KW-0597">Phosphoprotein</keyword>
<keyword id="KW-1267">Proteomics identification</keyword>
<keyword id="KW-1185">Reference proteome</keyword>
<name>NPM3_HUMAN</name>
<comment type="function">
    <text evidence="3 4 5">Plays a role in the regulation of diverse cellular processes such as ribosome biogenesis, chromatin remodeling or protein chaperoning (PubMed:20073534, PubMed:22362753). Modulates the histone chaperone function and the RNA-binding activity of nucleolar phosphoprotein B23/NPM (PubMed:22362753). Efficiently mediates chromatin remodeling when included in a pentamer containing NPM3 and NPM (PubMed:15596447).</text>
</comment>
<comment type="subunit">
    <text evidence="3 5">Interacts with NPM (via N-terminus) (PubMed:15596447). Forms a pentamer with NPM at a ratio 4:1 (NPM3/NPM). Two pentamers form a decamer (PubMed:22362753).</text>
</comment>
<comment type="interaction">
    <interactant intactId="EBI-721544">
        <id>O75607</id>
    </interactant>
    <interactant intactId="EBI-6658150">
        <id>Q86SE8</id>
        <label>NPM2</label>
    </interactant>
    <organismsDiffer>false</organismsDiffer>
    <experiments>6</experiments>
</comment>
<comment type="interaction">
    <interactant intactId="EBI-721544">
        <id>O75607</id>
    </interactant>
    <interactant intactId="EBI-742943">
        <id>Q96BW1</id>
        <label>UPRT</label>
    </interactant>
    <organismsDiffer>false</organismsDiffer>
    <experiments>3</experiments>
</comment>
<comment type="interaction">
    <interactant intactId="EBI-721544">
        <id>O75607</id>
    </interactant>
    <interactant intactId="EBI-6164389">
        <id>P04608</id>
        <label>tat</label>
    </interactant>
    <organismsDiffer>true</organismsDiffer>
    <experiments>2</experiments>
</comment>
<comment type="subcellular location">
    <subcellularLocation>
        <location evidence="2">Nucleus</location>
    </subcellularLocation>
    <subcellularLocation>
        <location evidence="3 5">Nucleus</location>
        <location evidence="3 5">Nucleolus</location>
    </subcellularLocation>
    <text evidence="5">Mainly found in the granular component of the nucleolus.</text>
</comment>
<comment type="tissue specificity">
    <text evidence="2">Ubiquitous.</text>
</comment>
<comment type="PTM">
    <text evidence="8">Phosphorylated.</text>
</comment>
<comment type="similarity">
    <text evidence="8">Belongs to the nucleoplasmin family.</text>
</comment>
<feature type="initiator methionine" description="Removed" evidence="7 10 11 12 13 14 17">
    <location>
        <position position="1"/>
    </location>
</feature>
<feature type="chain" id="PRO_0000219489" description="Nucleoplasmin-3">
    <location>
        <begin position="2"/>
        <end position="178"/>
    </location>
</feature>
<feature type="region of interest" description="Disordered" evidence="1">
    <location>
        <begin position="141"/>
        <end position="178"/>
    </location>
</feature>
<feature type="compositionally biased region" description="Acidic residues" evidence="1">
    <location>
        <begin position="146"/>
        <end position="164"/>
    </location>
</feature>
<feature type="modified residue" description="N-acetylalanine" evidence="7 10 11 12 13 14 17">
    <location>
        <position position="2"/>
    </location>
</feature>
<feature type="modified residue" description="Phosphoserine" evidence="11 12 15">
    <location>
        <position position="13"/>
    </location>
</feature>
<feature type="modified residue" description="Phosphoserine" evidence="11 15">
    <location>
        <position position="16"/>
    </location>
</feature>
<feature type="modified residue" description="Omega-N-methylarginine" evidence="16">
    <location>
        <position position="27"/>
    </location>
</feature>
<feature type="modified residue" description="Phosphoserine" evidence="9">
    <location>
        <position position="147"/>
    </location>
</feature>
<feature type="modified residue" description="Phosphoserine" evidence="9">
    <location>
        <position position="151"/>
    </location>
</feature>
<feature type="modified residue" description="Phosphoserine" evidence="9">
    <location>
        <position position="158"/>
    </location>
</feature>
<feature type="sequence variant" id="VAR_050410" description="In dbSNP:rs34376117.">
    <original>S</original>
    <variation>N</variation>
    <location>
        <position position="16"/>
    </location>
</feature>
<feature type="sequence variant" id="VAR_050411" description="In dbSNP:rs2735420." evidence="6">
    <original>N</original>
    <variation>I</variation>
    <location>
        <position position="80"/>
    </location>
</feature>
<feature type="sequence conflict" description="In Ref. 3; AAD51496." evidence="8" ref="3">
    <original>EH</original>
    <variation>DD</variation>
    <location>
        <begin position="61"/>
        <end position="62"/>
    </location>
</feature>
<feature type="sequence conflict" description="In Ref. 3; AAD51496." evidence="8" ref="3">
    <original>E</original>
    <variation>K</variation>
    <location>
        <position position="83"/>
    </location>
</feature>
<dbReference type="EMBL" id="AY049737">
    <property type="protein sequence ID" value="AAL12172.1"/>
    <property type="molecule type" value="mRNA"/>
</dbReference>
<dbReference type="EMBL" id="AF081280">
    <property type="protein sequence ID" value="AAC31609.1"/>
    <property type="molecule type" value="mRNA"/>
</dbReference>
<dbReference type="EMBL" id="AF079325">
    <property type="protein sequence ID" value="AAD51496.1"/>
    <property type="molecule type" value="Genomic_DNA"/>
</dbReference>
<dbReference type="EMBL" id="BC041067">
    <property type="protein sequence ID" value="AAH41067.1"/>
    <property type="molecule type" value="mRNA"/>
</dbReference>
<dbReference type="EMBL" id="BC054868">
    <property type="protein sequence ID" value="AAH54868.1"/>
    <property type="molecule type" value="mRNA"/>
</dbReference>
<dbReference type="CCDS" id="CCDS7519.1"/>
<dbReference type="RefSeq" id="NP_008924.1">
    <property type="nucleotide sequence ID" value="NM_006993.3"/>
</dbReference>
<dbReference type="SMR" id="O75607"/>
<dbReference type="BioGRID" id="115640">
    <property type="interactions" value="273"/>
</dbReference>
<dbReference type="CORUM" id="O75607"/>
<dbReference type="FunCoup" id="O75607">
    <property type="interactions" value="1692"/>
</dbReference>
<dbReference type="IntAct" id="O75607">
    <property type="interactions" value="215"/>
</dbReference>
<dbReference type="MINT" id="O75607"/>
<dbReference type="STRING" id="9606.ENSP00000359128"/>
<dbReference type="GlyGen" id="O75607">
    <property type="glycosylation" value="1 site, 1 O-linked glycan (1 site)"/>
</dbReference>
<dbReference type="iPTMnet" id="O75607"/>
<dbReference type="PhosphoSitePlus" id="O75607"/>
<dbReference type="SwissPalm" id="O75607"/>
<dbReference type="BioMuta" id="NPM3"/>
<dbReference type="jPOST" id="O75607"/>
<dbReference type="MassIVE" id="O75607"/>
<dbReference type="PaxDb" id="9606-ENSP00000359128"/>
<dbReference type="PeptideAtlas" id="O75607"/>
<dbReference type="ProteomicsDB" id="50116"/>
<dbReference type="Pumba" id="O75607"/>
<dbReference type="TopDownProteomics" id="O75607"/>
<dbReference type="Antibodypedia" id="31335">
    <property type="antibodies" value="119 antibodies from 21 providers"/>
</dbReference>
<dbReference type="DNASU" id="10360"/>
<dbReference type="Ensembl" id="ENST00000370110.6">
    <property type="protein sequence ID" value="ENSP00000359128.5"/>
    <property type="gene ID" value="ENSG00000107833.11"/>
</dbReference>
<dbReference type="GeneID" id="10360"/>
<dbReference type="KEGG" id="hsa:10360"/>
<dbReference type="MANE-Select" id="ENST00000370110.6">
    <property type="protein sequence ID" value="ENSP00000359128.5"/>
    <property type="RefSeq nucleotide sequence ID" value="NM_006993.3"/>
    <property type="RefSeq protein sequence ID" value="NP_008924.1"/>
</dbReference>
<dbReference type="UCSC" id="uc001ktt.3">
    <property type="organism name" value="human"/>
</dbReference>
<dbReference type="AGR" id="HGNC:7931"/>
<dbReference type="CTD" id="10360"/>
<dbReference type="DisGeNET" id="10360"/>
<dbReference type="GeneCards" id="NPM3"/>
<dbReference type="HGNC" id="HGNC:7931">
    <property type="gene designation" value="NPM3"/>
</dbReference>
<dbReference type="HPA" id="ENSG00000107833">
    <property type="expression patterns" value="Low tissue specificity"/>
</dbReference>
<dbReference type="MIM" id="606456">
    <property type="type" value="gene"/>
</dbReference>
<dbReference type="neXtProt" id="NX_O75607"/>
<dbReference type="OpenTargets" id="ENSG00000107833"/>
<dbReference type="PharmGKB" id="PA31733"/>
<dbReference type="VEuPathDB" id="HostDB:ENSG00000107833"/>
<dbReference type="eggNOG" id="ENOG502S1E6">
    <property type="taxonomic scope" value="Eukaryota"/>
</dbReference>
<dbReference type="GeneTree" id="ENSGT00940000158796"/>
<dbReference type="HOGENOM" id="CLU_058838_1_0_1"/>
<dbReference type="InParanoid" id="O75607"/>
<dbReference type="OMA" id="QIVCINN"/>
<dbReference type="OrthoDB" id="9900353at2759"/>
<dbReference type="PAN-GO" id="O75607">
    <property type="GO annotations" value="7 GO annotations based on evolutionary models"/>
</dbReference>
<dbReference type="PhylomeDB" id="O75607"/>
<dbReference type="TreeFam" id="TF327704"/>
<dbReference type="PathwayCommons" id="O75607"/>
<dbReference type="SignaLink" id="O75607"/>
<dbReference type="BioGRID-ORCS" id="10360">
    <property type="hits" value="71 hits in 1157 CRISPR screens"/>
</dbReference>
<dbReference type="CD-CODE" id="91857CE7">
    <property type="entry name" value="Nucleolus"/>
</dbReference>
<dbReference type="ChiTaRS" id="NPM3">
    <property type="organism name" value="human"/>
</dbReference>
<dbReference type="GeneWiki" id="NPM3"/>
<dbReference type="GenomeRNAi" id="10360"/>
<dbReference type="Pharos" id="O75607">
    <property type="development level" value="Tbio"/>
</dbReference>
<dbReference type="PRO" id="PR:O75607"/>
<dbReference type="Proteomes" id="UP000005640">
    <property type="component" value="Chromosome 10"/>
</dbReference>
<dbReference type="RNAct" id="O75607">
    <property type="molecule type" value="protein"/>
</dbReference>
<dbReference type="Bgee" id="ENSG00000107833">
    <property type="expression patterns" value="Expressed in oocyte and 128 other cell types or tissues"/>
</dbReference>
<dbReference type="GO" id="GO:0015629">
    <property type="term" value="C:actin cytoskeleton"/>
    <property type="evidence" value="ECO:0000314"/>
    <property type="project" value="HPA"/>
</dbReference>
<dbReference type="GO" id="GO:0005737">
    <property type="term" value="C:cytoplasm"/>
    <property type="evidence" value="ECO:0000318"/>
    <property type="project" value="GO_Central"/>
</dbReference>
<dbReference type="GO" id="GO:0005829">
    <property type="term" value="C:cytosol"/>
    <property type="evidence" value="ECO:0000314"/>
    <property type="project" value="HPA"/>
</dbReference>
<dbReference type="GO" id="GO:0005730">
    <property type="term" value="C:nucleolus"/>
    <property type="evidence" value="ECO:0000314"/>
    <property type="project" value="HPA"/>
</dbReference>
<dbReference type="GO" id="GO:0005654">
    <property type="term" value="C:nucleoplasm"/>
    <property type="evidence" value="ECO:0000318"/>
    <property type="project" value="GO_Central"/>
</dbReference>
<dbReference type="GO" id="GO:0003682">
    <property type="term" value="F:chromatin binding"/>
    <property type="evidence" value="ECO:0000318"/>
    <property type="project" value="GO_Central"/>
</dbReference>
<dbReference type="GO" id="GO:0042393">
    <property type="term" value="F:histone binding"/>
    <property type="evidence" value="ECO:0000318"/>
    <property type="project" value="GO_Central"/>
</dbReference>
<dbReference type="GO" id="GO:0003723">
    <property type="term" value="F:RNA binding"/>
    <property type="evidence" value="ECO:0007005"/>
    <property type="project" value="UniProtKB"/>
</dbReference>
<dbReference type="GO" id="GO:0006338">
    <property type="term" value="P:chromatin remodeling"/>
    <property type="evidence" value="ECO:0000318"/>
    <property type="project" value="GO_Central"/>
</dbReference>
<dbReference type="GO" id="GO:0006364">
    <property type="term" value="P:rRNA processing"/>
    <property type="evidence" value="ECO:0007669"/>
    <property type="project" value="Ensembl"/>
</dbReference>
<dbReference type="GO" id="GO:0009303">
    <property type="term" value="P:rRNA transcription"/>
    <property type="evidence" value="ECO:0007669"/>
    <property type="project" value="Ensembl"/>
</dbReference>
<dbReference type="FunFam" id="2.60.120.340:FF:000002">
    <property type="entry name" value="Nucleophosmin/nucleoplasmin 3"/>
    <property type="match status" value="1"/>
</dbReference>
<dbReference type="Gene3D" id="2.60.120.340">
    <property type="entry name" value="Nucleoplasmin core domain"/>
    <property type="match status" value="1"/>
</dbReference>
<dbReference type="InterPro" id="IPR004301">
    <property type="entry name" value="Nucleoplasmin"/>
</dbReference>
<dbReference type="InterPro" id="IPR024057">
    <property type="entry name" value="Nucleoplasmin_core_dom"/>
</dbReference>
<dbReference type="InterPro" id="IPR036824">
    <property type="entry name" value="Nucleoplasmin_core_dom_sf"/>
</dbReference>
<dbReference type="PANTHER" id="PTHR22747">
    <property type="entry name" value="NUCLEOPLASMIN"/>
    <property type="match status" value="1"/>
</dbReference>
<dbReference type="PANTHER" id="PTHR22747:SF13">
    <property type="entry name" value="NUCLEOPLASMIN-3"/>
    <property type="match status" value="1"/>
</dbReference>
<dbReference type="Pfam" id="PF03066">
    <property type="entry name" value="Nucleoplasmin"/>
    <property type="match status" value="1"/>
</dbReference>
<dbReference type="SUPFAM" id="SSF69203">
    <property type="entry name" value="Nucleoplasmin-like core domain"/>
    <property type="match status" value="1"/>
</dbReference>
<evidence type="ECO:0000256" key="1">
    <source>
        <dbReference type="SAM" id="MobiDB-lite"/>
    </source>
</evidence>
<evidence type="ECO:0000269" key="2">
    <source>
    </source>
</evidence>
<evidence type="ECO:0000269" key="3">
    <source>
    </source>
</evidence>
<evidence type="ECO:0000269" key="4">
    <source>
    </source>
</evidence>
<evidence type="ECO:0000269" key="5">
    <source>
    </source>
</evidence>
<evidence type="ECO:0000269" key="6">
    <source ref="3"/>
</evidence>
<evidence type="ECO:0000269" key="7">
    <source ref="5"/>
</evidence>
<evidence type="ECO:0000305" key="8"/>
<evidence type="ECO:0007744" key="9">
    <source>
    </source>
</evidence>
<evidence type="ECO:0007744" key="10">
    <source>
    </source>
</evidence>
<evidence type="ECO:0007744" key="11">
    <source>
    </source>
</evidence>
<evidence type="ECO:0007744" key="12">
    <source>
    </source>
</evidence>
<evidence type="ECO:0007744" key="13">
    <source>
    </source>
</evidence>
<evidence type="ECO:0007744" key="14">
    <source>
    </source>
</evidence>
<evidence type="ECO:0007744" key="15">
    <source>
    </source>
</evidence>
<evidence type="ECO:0007744" key="16">
    <source>
    </source>
</evidence>
<evidence type="ECO:0007744" key="17">
    <source>
    </source>
</evidence>
<reference key="1">
    <citation type="journal article" date="2001" name="BMC Genomics">
        <title>Cloning, expression and nuclear localization of human NPM3, a member of the nucleophosmin/nucleoplasmin family of nuclear chaperones.</title>
        <authorList>
            <person name="Shackleford G.M."/>
            <person name="Ganguly A."/>
            <person name="MacArthur C.A."/>
        </authorList>
    </citation>
    <scope>NUCLEOTIDE SEQUENCE [MRNA]</scope>
    <scope>SUBCELLULAR LOCATION</scope>
    <scope>TISSUE SPECIFICITY</scope>
</reference>
<reference key="2">
    <citation type="submission" date="1998-08" db="EMBL/GenBank/DDBJ databases">
        <authorList>
            <person name="Hu G."/>
        </authorList>
    </citation>
    <scope>NUCLEOTIDE SEQUENCE [MRNA]</scope>
</reference>
<reference key="3">
    <citation type="submission" date="1998-07" db="EMBL/GenBank/DDBJ databases">
        <title>Retinoic acid induces differential expression of FGF8 isoforms in LNCaP cells.</title>
        <authorList>
            <person name="Brondani V."/>
            <person name="Albrecht G."/>
            <person name="Hamy F."/>
        </authorList>
    </citation>
    <scope>NUCLEOTIDE SEQUENCE [GENOMIC DNA]</scope>
    <scope>VARIANT ILE-80</scope>
</reference>
<reference key="4">
    <citation type="journal article" date="2004" name="Genome Res.">
        <title>The status, quality, and expansion of the NIH full-length cDNA project: the Mammalian Gene Collection (MGC).</title>
        <authorList>
            <consortium name="The MGC Project Team"/>
        </authorList>
    </citation>
    <scope>NUCLEOTIDE SEQUENCE [LARGE SCALE MRNA]</scope>
    <source>
        <tissue>Skin</tissue>
    </source>
</reference>
<reference key="5">
    <citation type="submission" date="2005-07" db="UniProtKB">
        <authorList>
            <person name="Bienvenut W.V."/>
        </authorList>
    </citation>
    <scope>PROTEIN SEQUENCE OF 2-17</scope>
    <scope>CLEAVAGE OF INITIATOR METHIONINE</scope>
    <scope>ACETYLATION AT ALA-2</scope>
    <scope>IDENTIFICATION BY MASS SPECTROMETRY</scope>
    <source>
        <tissue>B-cell lymphoma</tissue>
    </source>
</reference>
<reference key="6">
    <citation type="journal article" date="2005" name="J. Biol. Chem.">
        <title>Protein NPM3 interacts with the multifunctional nucleolar protein B23/nucleophosmin and inhibits ribosome biogenesis.</title>
        <authorList>
            <person name="Huang N."/>
            <person name="Negi S."/>
            <person name="Szebeni A."/>
            <person name="Olson M.O."/>
        </authorList>
    </citation>
    <scope>FUNCTION</scope>
    <scope>INTERACTION WITH NPM</scope>
    <scope>SUBCELLULAR LOCATION</scope>
</reference>
<reference key="7">
    <citation type="journal article" date="2008" name="Proc. Natl. Acad. Sci. U.S.A.">
        <title>A quantitative atlas of mitotic phosphorylation.</title>
        <authorList>
            <person name="Dephoure N."/>
            <person name="Zhou C."/>
            <person name="Villen J."/>
            <person name="Beausoleil S.A."/>
            <person name="Bakalarski C.E."/>
            <person name="Elledge S.J."/>
            <person name="Gygi S.P."/>
        </authorList>
    </citation>
    <scope>PHOSPHORYLATION [LARGE SCALE ANALYSIS] AT SER-147; SER-151 AND SER-158</scope>
    <scope>IDENTIFICATION BY MASS SPECTROMETRY [LARGE SCALE ANALYSIS]</scope>
    <source>
        <tissue>Cervix carcinoma</tissue>
    </source>
</reference>
<reference key="8">
    <citation type="journal article" date="2009" name="Anal. Chem.">
        <title>Lys-N and trypsin cover complementary parts of the phosphoproteome in a refined SCX-based approach.</title>
        <authorList>
            <person name="Gauci S."/>
            <person name="Helbig A.O."/>
            <person name="Slijper M."/>
            <person name="Krijgsveld J."/>
            <person name="Heck A.J."/>
            <person name="Mohammed S."/>
        </authorList>
    </citation>
    <scope>ACETYLATION [LARGE SCALE ANALYSIS] AT ALA-2</scope>
    <scope>CLEAVAGE OF INITIATOR METHIONINE [LARGE SCALE ANALYSIS]</scope>
    <scope>IDENTIFICATION BY MASS SPECTROMETRY [LARGE SCALE ANALYSIS]</scope>
</reference>
<reference key="9">
    <citation type="journal article" date="2010" name="Biochemistry">
        <title>NPM3, a member of the nucleophosmin/nucleoplasmin family, enhances activator-dependent transcription.</title>
        <authorList>
            <person name="Gadad S.S."/>
            <person name="Shandilya J."/>
            <person name="Kishore A.H."/>
            <person name="Kundu T.K."/>
        </authorList>
    </citation>
    <scope>FUNCTION</scope>
</reference>
<reference key="10">
    <citation type="journal article" date="2010" name="Sci. Signal.">
        <title>Quantitative phosphoproteomics reveals widespread full phosphorylation site occupancy during mitosis.</title>
        <authorList>
            <person name="Olsen J.V."/>
            <person name="Vermeulen M."/>
            <person name="Santamaria A."/>
            <person name="Kumar C."/>
            <person name="Miller M.L."/>
            <person name="Jensen L.J."/>
            <person name="Gnad F."/>
            <person name="Cox J."/>
            <person name="Jensen T.S."/>
            <person name="Nigg E.A."/>
            <person name="Brunak S."/>
            <person name="Mann M."/>
        </authorList>
    </citation>
    <scope>ACETYLATION [LARGE SCALE ANALYSIS] AT ALA-2</scope>
    <scope>PHOSPHORYLATION [LARGE SCALE ANALYSIS] AT SER-13 AND SER-16</scope>
    <scope>CLEAVAGE OF INITIATOR METHIONINE [LARGE SCALE ANALYSIS]</scope>
    <scope>IDENTIFICATION BY MASS SPECTROMETRY [LARGE SCALE ANALYSIS]</scope>
    <source>
        <tissue>Cervix carcinoma</tissue>
    </source>
</reference>
<reference key="11">
    <citation type="journal article" date="2011" name="BMC Syst. Biol.">
        <title>Initial characterization of the human central proteome.</title>
        <authorList>
            <person name="Burkard T.R."/>
            <person name="Planyavsky M."/>
            <person name="Kaupe I."/>
            <person name="Breitwieser F.P."/>
            <person name="Buerckstuemmer T."/>
            <person name="Bennett K.L."/>
            <person name="Superti-Furga G."/>
            <person name="Colinge J."/>
        </authorList>
    </citation>
    <scope>IDENTIFICATION BY MASS SPECTROMETRY [LARGE SCALE ANALYSIS]</scope>
</reference>
<reference key="12">
    <citation type="journal article" date="2011" name="Sci. Signal.">
        <title>System-wide temporal characterization of the proteome and phosphoproteome of human embryonic stem cell differentiation.</title>
        <authorList>
            <person name="Rigbolt K.T."/>
            <person name="Prokhorova T.A."/>
            <person name="Akimov V."/>
            <person name="Henningsen J."/>
            <person name="Johansen P.T."/>
            <person name="Kratchmarova I."/>
            <person name="Kassem M."/>
            <person name="Mann M."/>
            <person name="Olsen J.V."/>
            <person name="Blagoev B."/>
        </authorList>
    </citation>
    <scope>ACETYLATION [LARGE SCALE ANALYSIS] AT ALA-2</scope>
    <scope>PHOSPHORYLATION [LARGE SCALE ANALYSIS] AT SER-13</scope>
    <scope>CLEAVAGE OF INITIATOR METHIONINE [LARGE SCALE ANALYSIS]</scope>
    <scope>IDENTIFICATION BY MASS SPECTROMETRY [LARGE SCALE ANALYSIS]</scope>
</reference>
<reference key="13">
    <citation type="journal article" date="2012" name="Mol. Cell. Proteomics">
        <title>Comparative large-scale characterisation of plant vs. mammal proteins reveals similar and idiosyncratic N-alpha acetylation features.</title>
        <authorList>
            <person name="Bienvenut W.V."/>
            <person name="Sumpton D."/>
            <person name="Martinez A."/>
            <person name="Lilla S."/>
            <person name="Espagne C."/>
            <person name="Meinnel T."/>
            <person name="Giglione C."/>
        </authorList>
    </citation>
    <scope>ACETYLATION [LARGE SCALE ANALYSIS] AT ALA-2</scope>
    <scope>CLEAVAGE OF INITIATOR METHIONINE [LARGE SCALE ANALYSIS]</scope>
    <scope>IDENTIFICATION BY MASS SPECTROMETRY [LARGE SCALE ANALYSIS]</scope>
</reference>
<reference key="14">
    <citation type="journal article" date="2012" name="Proc. Natl. Acad. Sci. U.S.A.">
        <title>N-terminal acetylome analyses and functional insights of the N-terminal acetyltransferase NatB.</title>
        <authorList>
            <person name="Van Damme P."/>
            <person name="Lasa M."/>
            <person name="Polevoda B."/>
            <person name="Gazquez C."/>
            <person name="Elosegui-Artola A."/>
            <person name="Kim D.S."/>
            <person name="De Juan-Pardo E."/>
            <person name="Demeyer K."/>
            <person name="Hole K."/>
            <person name="Larrea E."/>
            <person name="Timmerman E."/>
            <person name="Prieto J."/>
            <person name="Arnesen T."/>
            <person name="Sherman F."/>
            <person name="Gevaert K."/>
            <person name="Aldabe R."/>
        </authorList>
    </citation>
    <scope>ACETYLATION [LARGE SCALE ANALYSIS] AT ALA-2</scope>
    <scope>CLEAVAGE OF INITIATOR METHIONINE [LARGE SCALE ANALYSIS]</scope>
    <scope>IDENTIFICATION BY MASS SPECTROMETRY [LARGE SCALE ANALYSIS]</scope>
</reference>
<reference key="15">
    <citation type="journal article" date="2012" name="Nucleic Acids Res.">
        <title>Function of homo- and hetero-oligomers of human nucleoplasmin/nucleophosmin family proteins NPM1, NPM2 and NPM3 during sperm chromatin remodeling.</title>
        <authorList>
            <person name="Okuwaki M."/>
            <person name="Sumi A."/>
            <person name="Hisaoka M."/>
            <person name="Saotome-Nakamura A."/>
            <person name="Akashi S."/>
            <person name="Nishimura Y."/>
            <person name="Nagata K."/>
        </authorList>
    </citation>
    <scope>FUNCTION</scope>
    <scope>SUBCELLULAR LOCATION</scope>
    <scope>INTERACTION WITH NPM</scope>
</reference>
<reference key="16">
    <citation type="journal article" date="2013" name="J. Proteome Res.">
        <title>Toward a comprehensive characterization of a human cancer cell phosphoproteome.</title>
        <authorList>
            <person name="Zhou H."/>
            <person name="Di Palma S."/>
            <person name="Preisinger C."/>
            <person name="Peng M."/>
            <person name="Polat A.N."/>
            <person name="Heck A.J."/>
            <person name="Mohammed S."/>
        </authorList>
    </citation>
    <scope>PHOSPHORYLATION [LARGE SCALE ANALYSIS] AT SER-13 AND SER-16</scope>
    <scope>IDENTIFICATION BY MASS SPECTROMETRY [LARGE SCALE ANALYSIS]</scope>
    <source>
        <tissue>Cervix carcinoma</tissue>
        <tissue>Erythroleukemia</tissue>
    </source>
</reference>
<reference key="17">
    <citation type="journal article" date="2014" name="Mol. Cell. Proteomics">
        <title>Immunoaffinity enrichment and mass spectrometry analysis of protein methylation.</title>
        <authorList>
            <person name="Guo A."/>
            <person name="Gu H."/>
            <person name="Zhou J."/>
            <person name="Mulhern D."/>
            <person name="Wang Y."/>
            <person name="Lee K.A."/>
            <person name="Yang V."/>
            <person name="Aguiar M."/>
            <person name="Kornhauser J."/>
            <person name="Jia X."/>
            <person name="Ren J."/>
            <person name="Beausoleil S.A."/>
            <person name="Silva J.C."/>
            <person name="Vemulapalli V."/>
            <person name="Bedford M.T."/>
            <person name="Comb M.J."/>
        </authorList>
    </citation>
    <scope>METHYLATION [LARGE SCALE ANALYSIS] AT ARG-27</scope>
    <scope>IDENTIFICATION BY MASS SPECTROMETRY [LARGE SCALE ANALYSIS]</scope>
    <source>
        <tissue>Colon carcinoma</tissue>
    </source>
</reference>
<reference key="18">
    <citation type="journal article" date="2015" name="Proteomics">
        <title>N-terminome analysis of the human mitochondrial proteome.</title>
        <authorList>
            <person name="Vaca Jacome A.S."/>
            <person name="Rabilloud T."/>
            <person name="Schaeffer-Reiss C."/>
            <person name="Rompais M."/>
            <person name="Ayoub D."/>
            <person name="Lane L."/>
            <person name="Bairoch A."/>
            <person name="Van Dorsselaer A."/>
            <person name="Carapito C."/>
        </authorList>
    </citation>
    <scope>ACETYLATION [LARGE SCALE ANALYSIS] AT ALA-2</scope>
    <scope>CLEAVAGE OF INITIATOR METHIONINE [LARGE SCALE ANALYSIS]</scope>
    <scope>IDENTIFICATION BY MASS SPECTROMETRY [LARGE SCALE ANALYSIS]</scope>
</reference>
<protein>
    <recommendedName>
        <fullName>Nucleoplasmin-3</fullName>
    </recommendedName>
</protein>
<proteinExistence type="evidence at protein level"/>
<organism>
    <name type="scientific">Homo sapiens</name>
    <name type="common">Human</name>
    <dbReference type="NCBI Taxonomy" id="9606"/>
    <lineage>
        <taxon>Eukaryota</taxon>
        <taxon>Metazoa</taxon>
        <taxon>Chordata</taxon>
        <taxon>Craniata</taxon>
        <taxon>Vertebrata</taxon>
        <taxon>Euteleostomi</taxon>
        <taxon>Mammalia</taxon>
        <taxon>Eutheria</taxon>
        <taxon>Euarchontoglires</taxon>
        <taxon>Primates</taxon>
        <taxon>Haplorrhini</taxon>
        <taxon>Catarrhini</taxon>
        <taxon>Hominidae</taxon>
        <taxon>Homo</taxon>
    </lineage>
</organism>